<accession>C4QVX6</accession>
<protein>
    <recommendedName>
        <fullName>Autophagy-related protein 36</fullName>
    </recommendedName>
</protein>
<proteinExistence type="evidence at protein level"/>
<keyword id="KW-0072">Autophagy</keyword>
<keyword id="KW-0479">Metal-binding</keyword>
<keyword id="KW-1185">Reference proteome</keyword>
<keyword id="KW-0862">Zinc</keyword>
<keyword id="KW-0863">Zinc-finger</keyword>
<comment type="function">
    <text evidence="4">Micropexophagy-specific protein required for efficient micropexophagic apparatus (MIPA) formation but not for general autophagy.</text>
</comment>
<comment type="subunit">
    <text evidence="4">Interacts with ATG28.</text>
</comment>
<comment type="induction">
    <text evidence="4">Expression is induced by methanol and glucose.</text>
</comment>
<dbReference type="EMBL" id="FN392319">
    <property type="protein sequence ID" value="CAY67399.1"/>
    <property type="molecule type" value="Genomic_DNA"/>
</dbReference>
<dbReference type="RefSeq" id="XP_002489680.1">
    <property type="nucleotide sequence ID" value="XM_002489635.1"/>
</dbReference>
<dbReference type="STRING" id="644223.C4QVX6"/>
<dbReference type="EnsemblFungi" id="CAY67399">
    <property type="protein sequence ID" value="CAY67399"/>
    <property type="gene ID" value="PAS_chr1-1_0041"/>
</dbReference>
<dbReference type="GeneID" id="8197558"/>
<dbReference type="KEGG" id="ppa:PAS_chr1-1_0041"/>
<dbReference type="eggNOG" id="KOG0825">
    <property type="taxonomic scope" value="Eukaryota"/>
</dbReference>
<dbReference type="HOGENOM" id="CLU_606994_0_0_1"/>
<dbReference type="InParanoid" id="C4QVX6"/>
<dbReference type="OMA" id="IPSQYII"/>
<dbReference type="OrthoDB" id="8062037at2759"/>
<dbReference type="Proteomes" id="UP000000314">
    <property type="component" value="Chromosome 1"/>
</dbReference>
<dbReference type="GO" id="GO:0008270">
    <property type="term" value="F:zinc ion binding"/>
    <property type="evidence" value="ECO:0007669"/>
    <property type="project" value="UniProtKB-KW"/>
</dbReference>
<dbReference type="GO" id="GO:0006914">
    <property type="term" value="P:autophagy"/>
    <property type="evidence" value="ECO:0007669"/>
    <property type="project" value="UniProtKB-KW"/>
</dbReference>
<dbReference type="CDD" id="cd15489">
    <property type="entry name" value="PHD_SF"/>
    <property type="match status" value="1"/>
</dbReference>
<dbReference type="Gene3D" id="3.30.40.10">
    <property type="entry name" value="Zinc/RING finger domain, C3HC4 (zinc finger)"/>
    <property type="match status" value="2"/>
</dbReference>
<dbReference type="InterPro" id="IPR047157">
    <property type="entry name" value="PHRF1/Atg35"/>
</dbReference>
<dbReference type="InterPro" id="IPR018527">
    <property type="entry name" value="Rubredoxin_Fe_BS"/>
</dbReference>
<dbReference type="InterPro" id="IPR019786">
    <property type="entry name" value="Zinc_finger_PHD-type_CS"/>
</dbReference>
<dbReference type="InterPro" id="IPR011011">
    <property type="entry name" value="Znf_FYVE_PHD"/>
</dbReference>
<dbReference type="InterPro" id="IPR001965">
    <property type="entry name" value="Znf_PHD"/>
</dbReference>
<dbReference type="InterPro" id="IPR019787">
    <property type="entry name" value="Znf_PHD-finger"/>
</dbReference>
<dbReference type="InterPro" id="IPR001841">
    <property type="entry name" value="Znf_RING"/>
</dbReference>
<dbReference type="InterPro" id="IPR013083">
    <property type="entry name" value="Znf_RING/FYVE/PHD"/>
</dbReference>
<dbReference type="PANTHER" id="PTHR12618">
    <property type="entry name" value="PHD AND RING FINGER DOMAIN-CONTAINING PROTEIN 1"/>
    <property type="match status" value="1"/>
</dbReference>
<dbReference type="PANTHER" id="PTHR12618:SF20">
    <property type="entry name" value="PHD AND RING FINGER DOMAIN-CONTAINING PROTEIN 1"/>
    <property type="match status" value="1"/>
</dbReference>
<dbReference type="Pfam" id="PF00628">
    <property type="entry name" value="PHD"/>
    <property type="match status" value="1"/>
</dbReference>
<dbReference type="Pfam" id="PF13639">
    <property type="entry name" value="zf-RING_2"/>
    <property type="match status" value="1"/>
</dbReference>
<dbReference type="SMART" id="SM00249">
    <property type="entry name" value="PHD"/>
    <property type="match status" value="1"/>
</dbReference>
<dbReference type="SMART" id="SM00184">
    <property type="entry name" value="RING"/>
    <property type="match status" value="2"/>
</dbReference>
<dbReference type="SUPFAM" id="SSF57903">
    <property type="entry name" value="FYVE/PHD zinc finger"/>
    <property type="match status" value="1"/>
</dbReference>
<dbReference type="SUPFAM" id="SSF57850">
    <property type="entry name" value="RING/U-box"/>
    <property type="match status" value="1"/>
</dbReference>
<dbReference type="PROSITE" id="PS00202">
    <property type="entry name" value="RUBREDOXIN"/>
    <property type="match status" value="1"/>
</dbReference>
<dbReference type="PROSITE" id="PS01359">
    <property type="entry name" value="ZF_PHD_1"/>
    <property type="match status" value="1"/>
</dbReference>
<dbReference type="PROSITE" id="PS50016">
    <property type="entry name" value="ZF_PHD_2"/>
    <property type="match status" value="1"/>
</dbReference>
<dbReference type="PROSITE" id="PS50089">
    <property type="entry name" value="ZF_RING_2"/>
    <property type="match status" value="2"/>
</dbReference>
<sequence>MEEVCSICLEVLVDKEAFTEPCLHYYHNECIKEWTKRANTCPKCRRDYSQIRIGEEVISVKNRSLELHLVDETLEETRERLISYTNLCALCEDPSTSLIYCESCGGSFHFNCIGIGDELDSEWCCPLCGMFQNHLGEASNRNLISATPVGEGRRRVTSIVNTRRTNSIYRSHSNRPAQRAHLMTDSDYTMIVDQHREKLLESQLQESNTQSSGEEESWKLLDEALKSGTQNSQSSEFSTENNVVPLKNTHELGRKLKKPRRASGIKKNVVERSSSHQSTQILKPSSSLISDLLLETRGNSRHPSFTNSTQKLTVEALQSHDPTLKLNIPKTETLSLDQKIVIQKLFIKPRLRNLYDSNTLSKDNYIEINKIICRRLYDKFLQDQLALAYLKQVLEVKERLHGHDLKQFLAQFTHWSELNDFTDDKWQKQETEGSCNHKQTQILSMFDSIIDTMLQNELHKLLT</sequence>
<gene>
    <name type="primary">ATG35</name>
    <name type="ordered locus">PAS_chr1-1_0041</name>
</gene>
<name>ATG35_KOMPG</name>
<evidence type="ECO:0000255" key="1">
    <source>
        <dbReference type="PROSITE-ProRule" id="PRU00146"/>
    </source>
</evidence>
<evidence type="ECO:0000255" key="2">
    <source>
        <dbReference type="PROSITE-ProRule" id="PRU00175"/>
    </source>
</evidence>
<evidence type="ECO:0000256" key="3">
    <source>
        <dbReference type="SAM" id="MobiDB-lite"/>
    </source>
</evidence>
<evidence type="ECO:0000269" key="4">
    <source>
    </source>
</evidence>
<reference key="1">
    <citation type="journal article" date="2009" name="Nat. Biotechnol.">
        <title>Genome sequence of the recombinant protein production host Pichia pastoris.</title>
        <authorList>
            <person name="De Schutter K."/>
            <person name="Lin Y.-C."/>
            <person name="Tiels P."/>
            <person name="Van Hecke A."/>
            <person name="Glinka S."/>
            <person name="Weber-Lehmann J."/>
            <person name="Rouze P."/>
            <person name="Van de Peer Y."/>
            <person name="Callewaert N."/>
        </authorList>
    </citation>
    <scope>NUCLEOTIDE SEQUENCE [LARGE SCALE GENOMIC DNA]</scope>
    <source>
        <strain>GS115 / ATCC 20864</strain>
    </source>
</reference>
<reference key="2">
    <citation type="journal article" date="2011" name="Autophagy">
        <title>Atg35, a micropexophagy-specific protein that regulates micropexophagic apparatus formation in Pichia pastoris.</title>
        <authorList>
            <person name="Nazarko V.Y."/>
            <person name="Nazarko T.Y."/>
            <person name="Farre J.C."/>
            <person name="Stasyk O.V."/>
            <person name="Warnecke D."/>
            <person name="Ulaszewski S."/>
            <person name="Cregg J.M."/>
            <person name="Sibirny A.A."/>
            <person name="Subramani S."/>
        </authorList>
    </citation>
    <scope>INTERACTION WITH ATG28</scope>
    <scope>FUNCTION</scope>
    <scope>INDUCTION</scope>
</reference>
<organism>
    <name type="scientific">Komagataella phaffii (strain GS115 / ATCC 20864)</name>
    <name type="common">Yeast</name>
    <name type="synonym">Pichia pastoris</name>
    <dbReference type="NCBI Taxonomy" id="644223"/>
    <lineage>
        <taxon>Eukaryota</taxon>
        <taxon>Fungi</taxon>
        <taxon>Dikarya</taxon>
        <taxon>Ascomycota</taxon>
        <taxon>Saccharomycotina</taxon>
        <taxon>Pichiomycetes</taxon>
        <taxon>Pichiales</taxon>
        <taxon>Pichiaceae</taxon>
        <taxon>Komagataella</taxon>
    </lineage>
</organism>
<feature type="chain" id="PRO_0000422170" description="Autophagy-related protein 36">
    <location>
        <begin position="1"/>
        <end position="463"/>
    </location>
</feature>
<feature type="zinc finger region" description="RING-type; atypical" evidence="2">
    <location>
        <begin position="5"/>
        <end position="45"/>
    </location>
</feature>
<feature type="zinc finger region" description="PHD-type" evidence="1">
    <location>
        <begin position="85"/>
        <end position="131"/>
    </location>
</feature>
<feature type="region of interest" description="Disordered" evidence="3">
    <location>
        <begin position="229"/>
        <end position="281"/>
    </location>
</feature>
<feature type="compositionally biased region" description="Polar residues" evidence="3">
    <location>
        <begin position="229"/>
        <end position="242"/>
    </location>
</feature>
<feature type="compositionally biased region" description="Basic residues" evidence="3">
    <location>
        <begin position="255"/>
        <end position="264"/>
    </location>
</feature>